<reference key="1">
    <citation type="journal article" date="2008" name="J. Bacteriol.">
        <title>Complete genome sequence of uropathogenic Proteus mirabilis, a master of both adherence and motility.</title>
        <authorList>
            <person name="Pearson M.M."/>
            <person name="Sebaihia M."/>
            <person name="Churcher C."/>
            <person name="Quail M.A."/>
            <person name="Seshasayee A.S."/>
            <person name="Luscombe N.M."/>
            <person name="Abdellah Z."/>
            <person name="Arrosmith C."/>
            <person name="Atkin B."/>
            <person name="Chillingworth T."/>
            <person name="Hauser H."/>
            <person name="Jagels K."/>
            <person name="Moule S."/>
            <person name="Mungall K."/>
            <person name="Norbertczak H."/>
            <person name="Rabbinowitsch E."/>
            <person name="Walker D."/>
            <person name="Whithead S."/>
            <person name="Thomson N.R."/>
            <person name="Rather P.N."/>
            <person name="Parkhill J."/>
            <person name="Mobley H.L.T."/>
        </authorList>
    </citation>
    <scope>NUCLEOTIDE SEQUENCE [LARGE SCALE GENOMIC DNA]</scope>
    <source>
        <strain>HI4320</strain>
    </source>
</reference>
<keyword id="KW-0028">Amino-acid biosynthesis</keyword>
<keyword id="KW-0067">ATP-binding</keyword>
<keyword id="KW-0963">Cytoplasm</keyword>
<keyword id="KW-0418">Kinase</keyword>
<keyword id="KW-0547">Nucleotide-binding</keyword>
<keyword id="KW-0641">Proline biosynthesis</keyword>
<keyword id="KW-1185">Reference proteome</keyword>
<keyword id="KW-0808">Transferase</keyword>
<feature type="chain" id="PRO_1000206276" description="Glutamate 5-kinase">
    <location>
        <begin position="1"/>
        <end position="367"/>
    </location>
</feature>
<feature type="domain" description="PUA" evidence="1">
    <location>
        <begin position="275"/>
        <end position="353"/>
    </location>
</feature>
<feature type="binding site" evidence="1">
    <location>
        <position position="10"/>
    </location>
    <ligand>
        <name>ATP</name>
        <dbReference type="ChEBI" id="CHEBI:30616"/>
    </ligand>
</feature>
<feature type="binding site" evidence="1">
    <location>
        <position position="50"/>
    </location>
    <ligand>
        <name>substrate</name>
    </ligand>
</feature>
<feature type="binding site" evidence="1">
    <location>
        <position position="137"/>
    </location>
    <ligand>
        <name>substrate</name>
    </ligand>
</feature>
<feature type="binding site" evidence="1">
    <location>
        <position position="149"/>
    </location>
    <ligand>
        <name>substrate</name>
    </ligand>
</feature>
<feature type="binding site" evidence="1">
    <location>
        <begin position="169"/>
        <end position="170"/>
    </location>
    <ligand>
        <name>ATP</name>
        <dbReference type="ChEBI" id="CHEBI:30616"/>
    </ligand>
</feature>
<feature type="binding site" evidence="1">
    <location>
        <begin position="211"/>
        <end position="217"/>
    </location>
    <ligand>
        <name>ATP</name>
        <dbReference type="ChEBI" id="CHEBI:30616"/>
    </ligand>
</feature>
<dbReference type="EC" id="2.7.2.11" evidence="1"/>
<dbReference type="EMBL" id="AM942759">
    <property type="protein sequence ID" value="CAR40948.1"/>
    <property type="molecule type" value="Genomic_DNA"/>
</dbReference>
<dbReference type="RefSeq" id="WP_004247396.1">
    <property type="nucleotide sequence ID" value="NC_010554.1"/>
</dbReference>
<dbReference type="SMR" id="B4EUV0"/>
<dbReference type="EnsemblBacteria" id="CAR40948">
    <property type="protein sequence ID" value="CAR40948"/>
    <property type="gene ID" value="PMI0369"/>
</dbReference>
<dbReference type="GeneID" id="6802523"/>
<dbReference type="KEGG" id="pmr:PMI0369"/>
<dbReference type="eggNOG" id="COG0263">
    <property type="taxonomic scope" value="Bacteria"/>
</dbReference>
<dbReference type="HOGENOM" id="CLU_025400_2_0_6"/>
<dbReference type="UniPathway" id="UPA00098">
    <property type="reaction ID" value="UER00359"/>
</dbReference>
<dbReference type="Proteomes" id="UP000008319">
    <property type="component" value="Chromosome"/>
</dbReference>
<dbReference type="GO" id="GO:0005829">
    <property type="term" value="C:cytosol"/>
    <property type="evidence" value="ECO:0007669"/>
    <property type="project" value="TreeGrafter"/>
</dbReference>
<dbReference type="GO" id="GO:0005524">
    <property type="term" value="F:ATP binding"/>
    <property type="evidence" value="ECO:0007669"/>
    <property type="project" value="UniProtKB-KW"/>
</dbReference>
<dbReference type="GO" id="GO:0004349">
    <property type="term" value="F:glutamate 5-kinase activity"/>
    <property type="evidence" value="ECO:0007669"/>
    <property type="project" value="UniProtKB-UniRule"/>
</dbReference>
<dbReference type="GO" id="GO:0003723">
    <property type="term" value="F:RNA binding"/>
    <property type="evidence" value="ECO:0007669"/>
    <property type="project" value="InterPro"/>
</dbReference>
<dbReference type="GO" id="GO:0055129">
    <property type="term" value="P:L-proline biosynthetic process"/>
    <property type="evidence" value="ECO:0007669"/>
    <property type="project" value="UniProtKB-UniRule"/>
</dbReference>
<dbReference type="CDD" id="cd04242">
    <property type="entry name" value="AAK_G5K_ProB"/>
    <property type="match status" value="1"/>
</dbReference>
<dbReference type="CDD" id="cd21157">
    <property type="entry name" value="PUA_G5K"/>
    <property type="match status" value="1"/>
</dbReference>
<dbReference type="FunFam" id="2.30.130.10:FF:000003">
    <property type="entry name" value="Glutamate 5-kinase"/>
    <property type="match status" value="1"/>
</dbReference>
<dbReference type="FunFam" id="3.40.1160.10:FF:000006">
    <property type="entry name" value="Glutamate 5-kinase"/>
    <property type="match status" value="1"/>
</dbReference>
<dbReference type="Gene3D" id="3.40.1160.10">
    <property type="entry name" value="Acetylglutamate kinase-like"/>
    <property type="match status" value="2"/>
</dbReference>
<dbReference type="Gene3D" id="2.30.130.10">
    <property type="entry name" value="PUA domain"/>
    <property type="match status" value="1"/>
</dbReference>
<dbReference type="HAMAP" id="MF_00456">
    <property type="entry name" value="ProB"/>
    <property type="match status" value="1"/>
</dbReference>
<dbReference type="InterPro" id="IPR036393">
    <property type="entry name" value="AceGlu_kinase-like_sf"/>
</dbReference>
<dbReference type="InterPro" id="IPR001048">
    <property type="entry name" value="Asp/Glu/Uridylate_kinase"/>
</dbReference>
<dbReference type="InterPro" id="IPR041739">
    <property type="entry name" value="G5K_ProB"/>
</dbReference>
<dbReference type="InterPro" id="IPR001057">
    <property type="entry name" value="Glu/AcGlu_kinase"/>
</dbReference>
<dbReference type="InterPro" id="IPR011529">
    <property type="entry name" value="Glu_5kinase"/>
</dbReference>
<dbReference type="InterPro" id="IPR005715">
    <property type="entry name" value="Glu_5kinase/COase_Synthase"/>
</dbReference>
<dbReference type="InterPro" id="IPR019797">
    <property type="entry name" value="Glutamate_5-kinase_CS"/>
</dbReference>
<dbReference type="InterPro" id="IPR002478">
    <property type="entry name" value="PUA"/>
</dbReference>
<dbReference type="InterPro" id="IPR015947">
    <property type="entry name" value="PUA-like_sf"/>
</dbReference>
<dbReference type="InterPro" id="IPR036974">
    <property type="entry name" value="PUA_sf"/>
</dbReference>
<dbReference type="NCBIfam" id="TIGR01027">
    <property type="entry name" value="proB"/>
    <property type="match status" value="1"/>
</dbReference>
<dbReference type="PANTHER" id="PTHR43654">
    <property type="entry name" value="GLUTAMATE 5-KINASE"/>
    <property type="match status" value="1"/>
</dbReference>
<dbReference type="PANTHER" id="PTHR43654:SF1">
    <property type="entry name" value="ISOPENTENYL PHOSPHATE KINASE"/>
    <property type="match status" value="1"/>
</dbReference>
<dbReference type="Pfam" id="PF00696">
    <property type="entry name" value="AA_kinase"/>
    <property type="match status" value="1"/>
</dbReference>
<dbReference type="Pfam" id="PF01472">
    <property type="entry name" value="PUA"/>
    <property type="match status" value="1"/>
</dbReference>
<dbReference type="PIRSF" id="PIRSF000729">
    <property type="entry name" value="GK"/>
    <property type="match status" value="1"/>
</dbReference>
<dbReference type="PRINTS" id="PR00474">
    <property type="entry name" value="GLU5KINASE"/>
</dbReference>
<dbReference type="SMART" id="SM00359">
    <property type="entry name" value="PUA"/>
    <property type="match status" value="1"/>
</dbReference>
<dbReference type="SUPFAM" id="SSF53633">
    <property type="entry name" value="Carbamate kinase-like"/>
    <property type="match status" value="1"/>
</dbReference>
<dbReference type="SUPFAM" id="SSF88697">
    <property type="entry name" value="PUA domain-like"/>
    <property type="match status" value="1"/>
</dbReference>
<dbReference type="PROSITE" id="PS00902">
    <property type="entry name" value="GLUTAMATE_5_KINASE"/>
    <property type="match status" value="1"/>
</dbReference>
<dbReference type="PROSITE" id="PS50890">
    <property type="entry name" value="PUA"/>
    <property type="match status" value="1"/>
</dbReference>
<name>PROB_PROMH</name>
<accession>B4EUV0</accession>
<sequence length="367" mass="39246">MSSSQTLVVKLGTSVLTGGSRRLDQSHIVELVRQCAKQHEKGHRIIIVTSGAIAAGREYLNYPDLPATIASKQLLAAVGQSALIQVWKQLFAIYGIHIGQMLLTRADIEDRERFLNARDTLHALLDNKIIPVINENDAVATAEIKVGDNDNLSALAAILGGADKLLLLTDIEGLYTADPRSNPDAKLIPEVFDINDELRQMAGDSVSGLGTGGMATKLQAATVAGRAGIDVVIAAGVKPDVISKVIDNEPVGTLFHGLKSPLETRKRWIFGAPVAGVIIVDNGAEKAIKEQGSSLLPKGIKEIKGDFSRGCVIRIQSLQGKDLAHGVAHYNSDALRLIAGHHSQEISQILGYEYGSVAVHRDDMIVS</sequence>
<comment type="function">
    <text evidence="1">Catalyzes the transfer of a phosphate group to glutamate to form L-glutamate 5-phosphate.</text>
</comment>
<comment type="catalytic activity">
    <reaction evidence="1">
        <text>L-glutamate + ATP = L-glutamyl 5-phosphate + ADP</text>
        <dbReference type="Rhea" id="RHEA:14877"/>
        <dbReference type="ChEBI" id="CHEBI:29985"/>
        <dbReference type="ChEBI" id="CHEBI:30616"/>
        <dbReference type="ChEBI" id="CHEBI:58274"/>
        <dbReference type="ChEBI" id="CHEBI:456216"/>
        <dbReference type="EC" id="2.7.2.11"/>
    </reaction>
</comment>
<comment type="pathway">
    <text evidence="1">Amino-acid biosynthesis; L-proline biosynthesis; L-glutamate 5-semialdehyde from L-glutamate: step 1/2.</text>
</comment>
<comment type="subcellular location">
    <subcellularLocation>
        <location evidence="1">Cytoplasm</location>
    </subcellularLocation>
</comment>
<comment type="similarity">
    <text evidence="1">Belongs to the glutamate 5-kinase family.</text>
</comment>
<proteinExistence type="inferred from homology"/>
<evidence type="ECO:0000255" key="1">
    <source>
        <dbReference type="HAMAP-Rule" id="MF_00456"/>
    </source>
</evidence>
<organism>
    <name type="scientific">Proteus mirabilis (strain HI4320)</name>
    <dbReference type="NCBI Taxonomy" id="529507"/>
    <lineage>
        <taxon>Bacteria</taxon>
        <taxon>Pseudomonadati</taxon>
        <taxon>Pseudomonadota</taxon>
        <taxon>Gammaproteobacteria</taxon>
        <taxon>Enterobacterales</taxon>
        <taxon>Morganellaceae</taxon>
        <taxon>Proteus</taxon>
    </lineage>
</organism>
<gene>
    <name evidence="1" type="primary">proB</name>
    <name type="ordered locus">PMI0369</name>
</gene>
<protein>
    <recommendedName>
        <fullName evidence="1">Glutamate 5-kinase</fullName>
        <ecNumber evidence="1">2.7.2.11</ecNumber>
    </recommendedName>
    <alternativeName>
        <fullName evidence="1">Gamma-glutamyl kinase</fullName>
        <shortName evidence="1">GK</shortName>
    </alternativeName>
</protein>